<comment type="function">
    <text evidence="1">Key component of the proton channel; it plays a direct role in the translocation of protons across the membrane.</text>
</comment>
<comment type="subunit">
    <text evidence="1">F-type ATPases have 2 components, CF(1) - the catalytic core - and CF(0) - the membrane proton channel. CF(1) has five subunits: alpha(3), beta(3), gamma(1), delta(1), epsilon(1). CF(0) has three main subunits: a(1), b(2) and c(9-12). The alpha and beta chains form an alternating ring which encloses part of the gamma chain. CF(1) is attached to CF(0) by a central stalk formed by the gamma and epsilon chains, while a peripheral stalk is formed by the delta and b chains.</text>
</comment>
<comment type="subcellular location">
    <subcellularLocation>
        <location evidence="1">Cell membrane</location>
        <topology evidence="1">Multi-pass membrane protein</topology>
    </subcellularLocation>
</comment>
<comment type="similarity">
    <text evidence="1">Belongs to the ATPase A chain family.</text>
</comment>
<reference key="1">
    <citation type="journal article" date="2009" name="Genome Res.">
        <title>Complete genome of the cellulolytic thermophile Acidothermus cellulolyticus 11B provides insights into its ecophysiological and evolutionary adaptations.</title>
        <authorList>
            <person name="Barabote R.D."/>
            <person name="Xie G."/>
            <person name="Leu D.H."/>
            <person name="Normand P."/>
            <person name="Necsulea A."/>
            <person name="Daubin V."/>
            <person name="Medigue C."/>
            <person name="Adney W.S."/>
            <person name="Xu X.C."/>
            <person name="Lapidus A."/>
            <person name="Parales R.E."/>
            <person name="Detter C."/>
            <person name="Pujic P."/>
            <person name="Bruce D."/>
            <person name="Lavire C."/>
            <person name="Challacombe J.F."/>
            <person name="Brettin T.S."/>
            <person name="Berry A.M."/>
        </authorList>
    </citation>
    <scope>NUCLEOTIDE SEQUENCE [LARGE SCALE GENOMIC DNA]</scope>
    <source>
        <strain>ATCC 43068 / DSM 8971 / 11B</strain>
    </source>
</reference>
<feature type="chain" id="PRO_1000184271" description="ATP synthase subunit a">
    <location>
        <begin position="1"/>
        <end position="271"/>
    </location>
</feature>
<feature type="transmembrane region" description="Helical" evidence="1">
    <location>
        <begin position="31"/>
        <end position="51"/>
    </location>
</feature>
<feature type="transmembrane region" description="Helical" evidence="1">
    <location>
        <begin position="89"/>
        <end position="109"/>
    </location>
</feature>
<feature type="transmembrane region" description="Helical" evidence="1">
    <location>
        <begin position="124"/>
        <end position="144"/>
    </location>
</feature>
<feature type="transmembrane region" description="Helical" evidence="1">
    <location>
        <begin position="186"/>
        <end position="206"/>
    </location>
</feature>
<feature type="transmembrane region" description="Helical" evidence="1">
    <location>
        <begin position="216"/>
        <end position="236"/>
    </location>
</feature>
<feature type="region of interest" description="Disordered" evidence="2">
    <location>
        <begin position="247"/>
        <end position="271"/>
    </location>
</feature>
<organism>
    <name type="scientific">Acidothermus cellulolyticus (strain ATCC 43068 / DSM 8971 / 11B)</name>
    <dbReference type="NCBI Taxonomy" id="351607"/>
    <lineage>
        <taxon>Bacteria</taxon>
        <taxon>Bacillati</taxon>
        <taxon>Actinomycetota</taxon>
        <taxon>Actinomycetes</taxon>
        <taxon>Acidothermales</taxon>
        <taxon>Acidothermaceae</taxon>
        <taxon>Acidothermus</taxon>
    </lineage>
</organism>
<keyword id="KW-0066">ATP synthesis</keyword>
<keyword id="KW-1003">Cell membrane</keyword>
<keyword id="KW-0138">CF(0)</keyword>
<keyword id="KW-0375">Hydrogen ion transport</keyword>
<keyword id="KW-0406">Ion transport</keyword>
<keyword id="KW-0472">Membrane</keyword>
<keyword id="KW-1185">Reference proteome</keyword>
<keyword id="KW-0812">Transmembrane</keyword>
<keyword id="KW-1133">Transmembrane helix</keyword>
<keyword id="KW-0813">Transport</keyword>
<dbReference type="EMBL" id="CP000481">
    <property type="protein sequence ID" value="ABK52420.1"/>
    <property type="molecule type" value="Genomic_DNA"/>
</dbReference>
<dbReference type="RefSeq" id="WP_011719483.1">
    <property type="nucleotide sequence ID" value="NC_008578.1"/>
</dbReference>
<dbReference type="SMR" id="A0LSL0"/>
<dbReference type="FunCoup" id="A0LSL0">
    <property type="interactions" value="98"/>
</dbReference>
<dbReference type="STRING" id="351607.Acel_0647"/>
<dbReference type="KEGG" id="ace:Acel_0647"/>
<dbReference type="eggNOG" id="COG0356">
    <property type="taxonomic scope" value="Bacteria"/>
</dbReference>
<dbReference type="HOGENOM" id="CLU_041018_2_3_11"/>
<dbReference type="InParanoid" id="A0LSL0"/>
<dbReference type="OrthoDB" id="9809130at2"/>
<dbReference type="Proteomes" id="UP000008221">
    <property type="component" value="Chromosome"/>
</dbReference>
<dbReference type="GO" id="GO:0005886">
    <property type="term" value="C:plasma membrane"/>
    <property type="evidence" value="ECO:0007669"/>
    <property type="project" value="UniProtKB-SubCell"/>
</dbReference>
<dbReference type="GO" id="GO:0045259">
    <property type="term" value="C:proton-transporting ATP synthase complex"/>
    <property type="evidence" value="ECO:0007669"/>
    <property type="project" value="UniProtKB-KW"/>
</dbReference>
<dbReference type="GO" id="GO:0046933">
    <property type="term" value="F:proton-transporting ATP synthase activity, rotational mechanism"/>
    <property type="evidence" value="ECO:0007669"/>
    <property type="project" value="UniProtKB-UniRule"/>
</dbReference>
<dbReference type="GO" id="GO:0042777">
    <property type="term" value="P:proton motive force-driven plasma membrane ATP synthesis"/>
    <property type="evidence" value="ECO:0007669"/>
    <property type="project" value="TreeGrafter"/>
</dbReference>
<dbReference type="CDD" id="cd00310">
    <property type="entry name" value="ATP-synt_Fo_a_6"/>
    <property type="match status" value="1"/>
</dbReference>
<dbReference type="Gene3D" id="1.20.120.220">
    <property type="entry name" value="ATP synthase, F0 complex, subunit A"/>
    <property type="match status" value="1"/>
</dbReference>
<dbReference type="HAMAP" id="MF_01393">
    <property type="entry name" value="ATP_synth_a_bact"/>
    <property type="match status" value="1"/>
</dbReference>
<dbReference type="InterPro" id="IPR045082">
    <property type="entry name" value="ATP_syn_F0_a_bact/chloroplast"/>
</dbReference>
<dbReference type="InterPro" id="IPR000568">
    <property type="entry name" value="ATP_synth_F0_asu"/>
</dbReference>
<dbReference type="InterPro" id="IPR023011">
    <property type="entry name" value="ATP_synth_F0_asu_AS"/>
</dbReference>
<dbReference type="InterPro" id="IPR035908">
    <property type="entry name" value="F0_ATP_A_sf"/>
</dbReference>
<dbReference type="NCBIfam" id="TIGR01131">
    <property type="entry name" value="ATP_synt_6_or_A"/>
    <property type="match status" value="1"/>
</dbReference>
<dbReference type="PANTHER" id="PTHR42823">
    <property type="entry name" value="ATP SYNTHASE SUBUNIT A, CHLOROPLASTIC"/>
    <property type="match status" value="1"/>
</dbReference>
<dbReference type="PANTHER" id="PTHR42823:SF3">
    <property type="entry name" value="ATP SYNTHASE SUBUNIT A, CHLOROPLASTIC"/>
    <property type="match status" value="1"/>
</dbReference>
<dbReference type="Pfam" id="PF00119">
    <property type="entry name" value="ATP-synt_A"/>
    <property type="match status" value="1"/>
</dbReference>
<dbReference type="PRINTS" id="PR00123">
    <property type="entry name" value="ATPASEA"/>
</dbReference>
<dbReference type="SUPFAM" id="SSF81336">
    <property type="entry name" value="F1F0 ATP synthase subunit A"/>
    <property type="match status" value="1"/>
</dbReference>
<dbReference type="PROSITE" id="PS00449">
    <property type="entry name" value="ATPASE_A"/>
    <property type="match status" value="1"/>
</dbReference>
<proteinExistence type="inferred from homology"/>
<sequence length="271" mass="29835">MTLAAQPHVLAVEVDIGTHETAKFLGLTWHWDTILTSVIAGVIVVGLGLYMRWTARSGVPSKMQLLFEMLVSWVNRQVEESMGLRVAPFVAPMAVTLFVYILLCNWIGVLPSGHPEHLPAPTADINLTLTLALVVIVPMHIVSLKRRGLGRYIRHYFEPYKIFFPINVVEELAKPITLALRLFGNIFSGAIMVSLLALMPPYVLWLPQWLWKLIDLGVGVIQAFIFALLTILYYAFATATGGHGASDEHADGGDSSSRQASPTPLPAGQVR</sequence>
<protein>
    <recommendedName>
        <fullName evidence="1">ATP synthase subunit a</fullName>
    </recommendedName>
    <alternativeName>
        <fullName evidence="1">ATP synthase F0 sector subunit a</fullName>
    </alternativeName>
    <alternativeName>
        <fullName evidence="1">F-ATPase subunit 6</fullName>
    </alternativeName>
</protein>
<name>ATP6_ACIC1</name>
<accession>A0LSL0</accession>
<gene>
    <name evidence="1" type="primary">atpB</name>
    <name type="ordered locus">Acel_0647</name>
</gene>
<evidence type="ECO:0000255" key="1">
    <source>
        <dbReference type="HAMAP-Rule" id="MF_01393"/>
    </source>
</evidence>
<evidence type="ECO:0000256" key="2">
    <source>
        <dbReference type="SAM" id="MobiDB-lite"/>
    </source>
</evidence>